<keyword id="KW-0533">Nickel</keyword>
<keyword id="KW-1185">Reference proteome</keyword>
<protein>
    <recommendedName>
        <fullName evidence="1">Putative nickel insertion protein</fullName>
    </recommendedName>
</protein>
<dbReference type="EMBL" id="CP001287">
    <property type="protein sequence ID" value="ACK66426.1"/>
    <property type="molecule type" value="Genomic_DNA"/>
</dbReference>
<dbReference type="RefSeq" id="WP_012595693.1">
    <property type="nucleotide sequence ID" value="NC_011726.1"/>
</dbReference>
<dbReference type="SMR" id="B7K2N3"/>
<dbReference type="STRING" id="41431.PCC8801_2415"/>
<dbReference type="KEGG" id="cyp:PCC8801_2415"/>
<dbReference type="eggNOG" id="COG1641">
    <property type="taxonomic scope" value="Bacteria"/>
</dbReference>
<dbReference type="HOGENOM" id="CLU_028523_2_1_3"/>
<dbReference type="OrthoDB" id="9765625at2"/>
<dbReference type="Proteomes" id="UP000008204">
    <property type="component" value="Chromosome"/>
</dbReference>
<dbReference type="GO" id="GO:0016829">
    <property type="term" value="F:lyase activity"/>
    <property type="evidence" value="ECO:0007669"/>
    <property type="project" value="UniProtKB-UniRule"/>
</dbReference>
<dbReference type="GO" id="GO:0016151">
    <property type="term" value="F:nickel cation binding"/>
    <property type="evidence" value="ECO:0007669"/>
    <property type="project" value="UniProtKB-UniRule"/>
</dbReference>
<dbReference type="Gene3D" id="3.30.70.1380">
    <property type="entry name" value="Transcriptional regulatory protein pf0864 domain like"/>
    <property type="match status" value="1"/>
</dbReference>
<dbReference type="HAMAP" id="MF_01074">
    <property type="entry name" value="LarC"/>
    <property type="match status" value="1"/>
</dbReference>
<dbReference type="InterPro" id="IPR002822">
    <property type="entry name" value="Ni_insertion"/>
</dbReference>
<dbReference type="NCBIfam" id="TIGR00299">
    <property type="entry name" value="nickel pincer cofactor biosynthesis protein LarC"/>
    <property type="match status" value="1"/>
</dbReference>
<dbReference type="PANTHER" id="PTHR36566">
    <property type="entry name" value="NICKEL INSERTION PROTEIN-RELATED"/>
    <property type="match status" value="1"/>
</dbReference>
<dbReference type="PANTHER" id="PTHR36566:SF1">
    <property type="entry name" value="PYRIDINIUM-3,5-BISTHIOCARBOXYLIC ACID MONONUCLEOTIDE NICKEL INSERTION PROTEIN"/>
    <property type="match status" value="1"/>
</dbReference>
<dbReference type="Pfam" id="PF01969">
    <property type="entry name" value="Ni_insertion"/>
    <property type="match status" value="1"/>
</dbReference>
<reference key="1">
    <citation type="journal article" date="2011" name="MBio">
        <title>Novel metabolic attributes of the genus Cyanothece, comprising a group of unicellular nitrogen-fixing Cyanobacteria.</title>
        <authorList>
            <person name="Bandyopadhyay A."/>
            <person name="Elvitigala T."/>
            <person name="Welsh E."/>
            <person name="Stockel J."/>
            <person name="Liberton M."/>
            <person name="Min H."/>
            <person name="Sherman L.A."/>
            <person name="Pakrasi H.B."/>
        </authorList>
    </citation>
    <scope>NUCLEOTIDE SEQUENCE [LARGE SCALE GENOMIC DNA]</scope>
    <source>
        <strain>PCC 8801 / RF-1</strain>
    </source>
</reference>
<gene>
    <name type="ordered locus">PCC8801_2415</name>
</gene>
<sequence length="419" mass="46373">MTKIAYLECPSGIAGDMCLGSLVDSGVPLEYLIEQLKKLEIQDEYRLWSEKVYRQGQLATKVHVELVEHDPSNHPSQNTHHHHHHHTRHLPEIESMIKGANLPPQSREWSLAVFRQLAIAEGAVHGIEPEKVHFHEVGAIDAIIDIVGTCLGLDWLGIEALYCSEMPTGGGTVWAAHGRLPVPVPAVIKLWESRQVPVYSNNINKELVTPTGAAIAVTLAKHFGSPPAMKVQKIGLGAGSNELPIPNILRLWIGESNNPDQVQQLSEKIAVLETQIDDLNPQVIGYVFEALLAAGALDVFTQAIGMKKSRPGILLTVICTPEKVADCQNIIFKETTTLGIRHRIQNRSILQREIQQITTDYGVARVKIASQGIGDNKTILNVQAEYEDCVELALKSNQPLQIIQQIVLNTWYHQNCLKI</sequence>
<comment type="similarity">
    <text evidence="1">Belongs to the LarC family.</text>
</comment>
<evidence type="ECO:0000255" key="1">
    <source>
        <dbReference type="HAMAP-Rule" id="MF_01074"/>
    </source>
</evidence>
<evidence type="ECO:0000256" key="2">
    <source>
        <dbReference type="SAM" id="MobiDB-lite"/>
    </source>
</evidence>
<feature type="chain" id="PRO_1000136687" description="Putative nickel insertion protein">
    <location>
        <begin position="1"/>
        <end position="419"/>
    </location>
</feature>
<feature type="region of interest" description="Disordered" evidence="2">
    <location>
        <begin position="69"/>
        <end position="90"/>
    </location>
</feature>
<feature type="compositionally biased region" description="Basic residues" evidence="2">
    <location>
        <begin position="79"/>
        <end position="88"/>
    </location>
</feature>
<organism>
    <name type="scientific">Rippkaea orientalis (strain PCC 8801 / RF-1)</name>
    <name type="common">Cyanothece sp. (strain PCC 8801)</name>
    <dbReference type="NCBI Taxonomy" id="41431"/>
    <lineage>
        <taxon>Bacteria</taxon>
        <taxon>Bacillati</taxon>
        <taxon>Cyanobacteriota</taxon>
        <taxon>Cyanophyceae</taxon>
        <taxon>Oscillatoriophycideae</taxon>
        <taxon>Chroococcales</taxon>
        <taxon>Aphanothecaceae</taxon>
        <taxon>Rippkaea</taxon>
        <taxon>Rippkaea orientalis</taxon>
    </lineage>
</organism>
<proteinExistence type="inferred from homology"/>
<accession>B7K2N3</accession>
<name>Y2415_RIPO1</name>